<reference key="1">
    <citation type="journal article" date="2007" name="Science">
        <title>The Fusarium graminearum genome reveals a link between localized polymorphism and pathogen specialization.</title>
        <authorList>
            <person name="Cuomo C.A."/>
            <person name="Gueldener U."/>
            <person name="Xu J.-R."/>
            <person name="Trail F."/>
            <person name="Turgeon B.G."/>
            <person name="Di Pietro A."/>
            <person name="Walton J.D."/>
            <person name="Ma L.-J."/>
            <person name="Baker S.E."/>
            <person name="Rep M."/>
            <person name="Adam G."/>
            <person name="Antoniw J."/>
            <person name="Baldwin T."/>
            <person name="Calvo S.E."/>
            <person name="Chang Y.-L."/>
            <person name="DeCaprio D."/>
            <person name="Gale L.R."/>
            <person name="Gnerre S."/>
            <person name="Goswami R.S."/>
            <person name="Hammond-Kosack K."/>
            <person name="Harris L.J."/>
            <person name="Hilburn K."/>
            <person name="Kennell J.C."/>
            <person name="Kroken S."/>
            <person name="Magnuson J.K."/>
            <person name="Mannhaupt G."/>
            <person name="Mauceli E.W."/>
            <person name="Mewes H.-W."/>
            <person name="Mitterbauer R."/>
            <person name="Muehlbauer G."/>
            <person name="Muensterkoetter M."/>
            <person name="Nelson D."/>
            <person name="O'Donnell K."/>
            <person name="Ouellet T."/>
            <person name="Qi W."/>
            <person name="Quesneville H."/>
            <person name="Roncero M.I.G."/>
            <person name="Seong K.-Y."/>
            <person name="Tetko I.V."/>
            <person name="Urban M."/>
            <person name="Waalwijk C."/>
            <person name="Ward T.J."/>
            <person name="Yao J."/>
            <person name="Birren B.W."/>
            <person name="Kistler H.C."/>
        </authorList>
    </citation>
    <scope>NUCLEOTIDE SEQUENCE [LARGE SCALE GENOMIC DNA]</scope>
    <source>
        <strain>ATCC MYA-4620 / CBS 123657 / FGSC 9075 / NRRL 31084 / PH-1</strain>
    </source>
</reference>
<reference key="2">
    <citation type="journal article" date="2010" name="Nature">
        <title>Comparative genomics reveals mobile pathogenicity chromosomes in Fusarium.</title>
        <authorList>
            <person name="Ma L.-J."/>
            <person name="van der Does H.C."/>
            <person name="Borkovich K.A."/>
            <person name="Coleman J.J."/>
            <person name="Daboussi M.-J."/>
            <person name="Di Pietro A."/>
            <person name="Dufresne M."/>
            <person name="Freitag M."/>
            <person name="Grabherr M."/>
            <person name="Henrissat B."/>
            <person name="Houterman P.M."/>
            <person name="Kang S."/>
            <person name="Shim W.-B."/>
            <person name="Woloshuk C."/>
            <person name="Xie X."/>
            <person name="Xu J.-R."/>
            <person name="Antoniw J."/>
            <person name="Baker S.E."/>
            <person name="Bluhm B.H."/>
            <person name="Breakspear A."/>
            <person name="Brown D.W."/>
            <person name="Butchko R.A.E."/>
            <person name="Chapman S."/>
            <person name="Coulson R."/>
            <person name="Coutinho P.M."/>
            <person name="Danchin E.G.J."/>
            <person name="Diener A."/>
            <person name="Gale L.R."/>
            <person name="Gardiner D.M."/>
            <person name="Goff S."/>
            <person name="Hammond-Kosack K.E."/>
            <person name="Hilburn K."/>
            <person name="Hua-Van A."/>
            <person name="Jonkers W."/>
            <person name="Kazan K."/>
            <person name="Kodira C.D."/>
            <person name="Koehrsen M."/>
            <person name="Kumar L."/>
            <person name="Lee Y.-H."/>
            <person name="Li L."/>
            <person name="Manners J.M."/>
            <person name="Miranda-Saavedra D."/>
            <person name="Mukherjee M."/>
            <person name="Park G."/>
            <person name="Park J."/>
            <person name="Park S.-Y."/>
            <person name="Proctor R.H."/>
            <person name="Regev A."/>
            <person name="Ruiz-Roldan M.C."/>
            <person name="Sain D."/>
            <person name="Sakthikumar S."/>
            <person name="Sykes S."/>
            <person name="Schwartz D.C."/>
            <person name="Turgeon B.G."/>
            <person name="Wapinski I."/>
            <person name="Yoder O."/>
            <person name="Young S."/>
            <person name="Zeng Q."/>
            <person name="Zhou S."/>
            <person name="Galagan J."/>
            <person name="Cuomo C.A."/>
            <person name="Kistler H.C."/>
            <person name="Rep M."/>
        </authorList>
    </citation>
    <scope>GENOME REANNOTATION</scope>
    <source>
        <strain>ATCC MYA-4620 / CBS 123657 / FGSC 9075 / NRRL 31084 / PH-1</strain>
    </source>
</reference>
<reference key="3">
    <citation type="journal article" date="2015" name="BMC Genomics">
        <title>The completed genome sequence of the pathogenic ascomycete fungus Fusarium graminearum.</title>
        <authorList>
            <person name="King R."/>
            <person name="Urban M."/>
            <person name="Hammond-Kosack M.C.U."/>
            <person name="Hassani-Pak K."/>
            <person name="Hammond-Kosack K.E."/>
        </authorList>
    </citation>
    <scope>NUCLEOTIDE SEQUENCE [LARGE SCALE GENOMIC DNA]</scope>
    <source>
        <strain>ATCC MYA-4620 / CBS 123657 / FGSC 9075 / NRRL 31084 / PH-1</strain>
    </source>
</reference>
<reference key="4">
    <citation type="journal article" date="2017" name="Sci. Rep.">
        <title>Genome-wide functional analysis reveals that autophagy is necessary for growth, sporulation, deoxynivalenol production and virulence in Fusarium graminearum.</title>
        <authorList>
            <person name="Lv W."/>
            <person name="Wang C."/>
            <person name="Yang N."/>
            <person name="Que Y."/>
            <person name="Talbot N.J."/>
            <person name="Wang Z."/>
        </authorList>
    </citation>
    <scope>IDENTIFICATION</scope>
    <scope>FUNCTION</scope>
    <scope>DISRUPTION PHENOTYPE</scope>
</reference>
<sequence>MALQVLIAHTGLRLEVDTAQFSILDDLKTWVSKKTSIPPQHIVALNPHGRTVKITNLHTEKEIFVYDIRISSPGNTNLITPIPLPKRYAVPNAPNTIDDVQSITSWQELYKDRRNWAMRLVEDSGQMSSATLARYSEIDVIIKCLDAAVANLEISIKQIEPKYNDLKKWVAPALEEHGNLVERWEQYLDLAKSTPVSPSMVKFMTGREINKARPTLEDLIELDTAKKAGKLAPTAHRRFSDKANQLGNTASQMYQSLESLIANFETLMSRSALSHSTDSAQLLEDIEAVVKQMDSDYRAALGYGNTQRDVAQASKTASVHTEHLVPTLKKRVKEMEELLHYGTDARNSVASESAKFMRHVTEITSLHSNVKSQINVLNQSEDDMTTFDYLRLIHQLPYMYAAFVAEAVRRREWVDKVKTDSSTLANEMALFQDEESKRRRKWQKMIGSMYGPDLDTNVMGLEVNLLGEDTPWPALTKEDLTDFIQILQEQPVDQTVLDDIVKLVQELDSPTKQQSKRLKAFKNGSIHEAALGRSGLMIRGDDDLLQSLQEDKGKLENKLKTAESRVRRLEDLLHRQSQASRPGNLFQPQGSQQRERVNSASSVRSSRFDDRRRSSEGIDPLMRRITQLENELREEKQRSVNLQQELTTQSNNHEDVKGQHEDLKAQHEDLKGQMAEINTTKQDLLENMEALEREFVEERKNLEIEIKTLKARLEDTEDEIEQFDESRQHEKAGLVVRVEELEAELEQVNKQRQDDALKAQGQVEFLRKETRIQREQQEALEQQIQSAQEEVQNVSRKLSVAEEALDDHWQALTRLFSELSPDGTIPDNVVDLSNLLLTQAGTLVEKSRNSEADIELLKTQVEHFSSAISELREQVSQKDAKLSEDEMTVIHLRENIAEEQAKVSALEQELADGREQLTELRAKLSDGETGPEALQTRLEDEEKKVMTLTEEVASKQSHVGSLEEELRMFQEKVESLQGKISHMNSHYEHRDEKTKDLTQRLYSQNDRMCRLLERVGYAVTRKDGEMTVNKIPRAERNAQNLADSTDPSASIRKSGTLSRVLGDSVDLELLYWFNNSDMQAEDEKYEEFMNNLGKFDMELFSETVYRRIKEVEHMARKWQKEARSYRERAHILQKDSHEKIAFKHFREGDLALFLPTRNQQAGAWAAFNVGFPHYFLREQDAHRLRHREWLVARISRIQERVVDLSKSLQPSSETESINDEENDNPFQLSDGLHWYLIDALEDKPGAPSTPGMGKSTVAANTVEATANIHAHGVGGKGKSRESVTSIEGINKTLSKSLESRRSSTNSKKALPFQLGGTTLLKNSALASETNSLRAHNADTPSGTSPTQGGHLTSTNASLGQKNQRVDGPIRQPSDESSTQGGGAKADEQPRSVVQREDSVESPTRRSVVWDSLWSVDYNYESGSRRWLGG</sequence>
<protein>
    <recommendedName>
        <fullName evidence="5">Autophagy-related protein 11</fullName>
    </recommendedName>
</protein>
<accession>A0A098D065</accession>
<accession>A0A0E0RM29</accession>
<accession>A0A1C3YI63</accession>
<comment type="function">
    <text evidence="1 4">Involved in cytoplasm to vacuole transport (Cvt), pexophagy, mitophagy and nucleophagy (By similarity). Recruits mitochondria for their selective degradation via autophagy (mitophagy) during starvation, through its interaction with ATG32 (By similarity). Works as scaffold proteins that recruit ATG proteins to the pre-autophagosome (PAS), the site of vesicle/autophagosome formation (By similarity). Required for ATG9 anterograde transport from the mitochondria to the PAS (By similarity). Also recruits the ATG19-prAPE1 complex to the PAS (By similarity). Required for the Cvt vesicles completion (By similarity). Autophagy is required for proper vegetative growth, asexual/sexual reproduction, and full virulence (PubMed:28894236). Autophagy is particularly involved in the biosynthesis of deoxynivalenol (DON), an important virulence determinant (PubMed:28894236).</text>
</comment>
<comment type="subunit">
    <text evidence="1">Homodimer and potential homooligomers (By similarity). Interacts with ATG1 kinase and the ATG19 and ATG34 cargo protein transporters (By similarity). Interacts with ATG9, ATG17 and ATG20 (By similarity).</text>
</comment>
<comment type="subcellular location">
    <subcellularLocation>
        <location evidence="1">Preautophagosomal structure membrane</location>
        <topology evidence="1">Peripheral membrane protein</topology>
    </subcellularLocation>
    <subcellularLocation>
        <location evidence="1">Vacuole membrane</location>
        <topology evidence="1">Peripheral membrane protein</topology>
    </subcellularLocation>
    <text evidence="1">During pexophagy, accumulates in the vacuolar membrane region, where the peroxisomes contact the vacuole (By similarity).</text>
</comment>
<comment type="disruption phenotype">
    <text evidence="4">Significantly decreases the radial growth of colonies under nutrient-rich conditions (PubMed:28894236). Strongly reduces conidiation (PubMed:28894236).</text>
</comment>
<comment type="similarity">
    <text evidence="6">Belongs to the ATG11 family.</text>
</comment>
<comment type="sequence caution" evidence="6">
    <conflict type="erroneous gene model prediction">
        <sequence resource="EMBL-CDS" id="SCB64046"/>
    </conflict>
</comment>
<keyword id="KW-0072">Autophagy</keyword>
<keyword id="KW-0175">Coiled coil</keyword>
<keyword id="KW-0472">Membrane</keyword>
<keyword id="KW-0653">Protein transport</keyword>
<keyword id="KW-1185">Reference proteome</keyword>
<keyword id="KW-0813">Transport</keyword>
<keyword id="KW-0926">Vacuole</keyword>
<gene>
    <name evidence="5" type="primary">ATG11</name>
    <name type="ORF">FG00382</name>
    <name type="ORF">FGRAMPH1_01T01003</name>
</gene>
<organism>
    <name type="scientific">Gibberella zeae (strain ATCC MYA-4620 / CBS 123657 / FGSC 9075 / NRRL 31084 / PH-1)</name>
    <name type="common">Wheat head blight fungus</name>
    <name type="synonym">Fusarium graminearum</name>
    <dbReference type="NCBI Taxonomy" id="229533"/>
    <lineage>
        <taxon>Eukaryota</taxon>
        <taxon>Fungi</taxon>
        <taxon>Dikarya</taxon>
        <taxon>Ascomycota</taxon>
        <taxon>Pezizomycotina</taxon>
        <taxon>Sordariomycetes</taxon>
        <taxon>Hypocreomycetidae</taxon>
        <taxon>Hypocreales</taxon>
        <taxon>Nectriaceae</taxon>
        <taxon>Fusarium</taxon>
    </lineage>
</organism>
<feature type="chain" id="PRO_0000443901" description="Autophagy-related protein 11">
    <location>
        <begin position="1"/>
        <end position="1429"/>
    </location>
</feature>
<feature type="region of interest" description="Disordered" evidence="3">
    <location>
        <begin position="574"/>
        <end position="622"/>
    </location>
</feature>
<feature type="region of interest" description="Disordered" evidence="3">
    <location>
        <begin position="1205"/>
        <end position="1224"/>
    </location>
</feature>
<feature type="region of interest" description="Disordered" evidence="3">
    <location>
        <begin position="1333"/>
        <end position="1405"/>
    </location>
</feature>
<feature type="coiled-coil region" evidence="2">
    <location>
        <begin position="540"/>
        <end position="579"/>
    </location>
</feature>
<feature type="coiled-coil region" evidence="2">
    <location>
        <begin position="616"/>
        <end position="808"/>
    </location>
</feature>
<feature type="coiled-coil region" evidence="2">
    <location>
        <begin position="842"/>
        <end position="985"/>
    </location>
</feature>
<feature type="coiled-coil region" evidence="2">
    <location>
        <begin position="1106"/>
        <end position="1135"/>
    </location>
</feature>
<feature type="compositionally biased region" description="Polar residues" evidence="3">
    <location>
        <begin position="575"/>
        <end position="592"/>
    </location>
</feature>
<feature type="compositionally biased region" description="Basic and acidic residues" evidence="3">
    <location>
        <begin position="606"/>
        <end position="616"/>
    </location>
</feature>
<feature type="compositionally biased region" description="Polar residues" evidence="3">
    <location>
        <begin position="1206"/>
        <end position="1215"/>
    </location>
</feature>
<feature type="compositionally biased region" description="Polar residues" evidence="3">
    <location>
        <begin position="1333"/>
        <end position="1362"/>
    </location>
</feature>
<feature type="compositionally biased region" description="Basic and acidic residues" evidence="3">
    <location>
        <begin position="1384"/>
        <end position="1398"/>
    </location>
</feature>
<name>ATG11_GIBZE</name>
<dbReference type="EMBL" id="HG970332">
    <property type="protein sequence ID" value="SCB64046.1"/>
    <property type="status" value="ALT_SEQ"/>
    <property type="molecule type" value="Genomic_DNA"/>
</dbReference>
<dbReference type="SMR" id="A0A098D065"/>
<dbReference type="FunCoup" id="A0A098D065">
    <property type="interactions" value="138"/>
</dbReference>
<dbReference type="STRING" id="229533.A0A098D065"/>
<dbReference type="eggNOG" id="ENOG502QVZE">
    <property type="taxonomic scope" value="Eukaryota"/>
</dbReference>
<dbReference type="InParanoid" id="A0A098D065"/>
<dbReference type="Proteomes" id="UP000070720">
    <property type="component" value="Chromosome 1"/>
</dbReference>
<dbReference type="GO" id="GO:1990316">
    <property type="term" value="C:Atg1/ULK1 kinase complex"/>
    <property type="evidence" value="ECO:0007669"/>
    <property type="project" value="TreeGrafter"/>
</dbReference>
<dbReference type="GO" id="GO:0034045">
    <property type="term" value="C:phagophore assembly site membrane"/>
    <property type="evidence" value="ECO:0007669"/>
    <property type="project" value="UniProtKB-SubCell"/>
</dbReference>
<dbReference type="GO" id="GO:0005774">
    <property type="term" value="C:vacuolar membrane"/>
    <property type="evidence" value="ECO:0007669"/>
    <property type="project" value="UniProtKB-SubCell"/>
</dbReference>
<dbReference type="GO" id="GO:0060090">
    <property type="term" value="F:molecular adaptor activity"/>
    <property type="evidence" value="ECO:0007669"/>
    <property type="project" value="TreeGrafter"/>
</dbReference>
<dbReference type="GO" id="GO:0019901">
    <property type="term" value="F:protein kinase binding"/>
    <property type="evidence" value="ECO:0007669"/>
    <property type="project" value="TreeGrafter"/>
</dbReference>
<dbReference type="GO" id="GO:0000045">
    <property type="term" value="P:autophagosome assembly"/>
    <property type="evidence" value="ECO:0007669"/>
    <property type="project" value="InterPro"/>
</dbReference>
<dbReference type="GO" id="GO:0000422">
    <property type="term" value="P:autophagy of mitochondrion"/>
    <property type="evidence" value="ECO:0007669"/>
    <property type="project" value="TreeGrafter"/>
</dbReference>
<dbReference type="GO" id="GO:0034727">
    <property type="term" value="P:piecemeal microautophagy of the nucleus"/>
    <property type="evidence" value="ECO:0007669"/>
    <property type="project" value="TreeGrafter"/>
</dbReference>
<dbReference type="GO" id="GO:0015031">
    <property type="term" value="P:protein transport"/>
    <property type="evidence" value="ECO:0007669"/>
    <property type="project" value="UniProtKB-KW"/>
</dbReference>
<dbReference type="GO" id="GO:0061709">
    <property type="term" value="P:reticulophagy"/>
    <property type="evidence" value="ECO:0007669"/>
    <property type="project" value="TreeGrafter"/>
</dbReference>
<dbReference type="GO" id="GO:0034517">
    <property type="term" value="P:ribophagy"/>
    <property type="evidence" value="ECO:0007669"/>
    <property type="project" value="TreeGrafter"/>
</dbReference>
<dbReference type="Gene3D" id="1.10.287.1490">
    <property type="match status" value="2"/>
</dbReference>
<dbReference type="InterPro" id="IPR040040">
    <property type="entry name" value="ATG11"/>
</dbReference>
<dbReference type="InterPro" id="IPR019460">
    <property type="entry name" value="Atg11_C"/>
</dbReference>
<dbReference type="InterPro" id="IPR045326">
    <property type="entry name" value="ATG17-like_dom"/>
</dbReference>
<dbReference type="PANTHER" id="PTHR13222">
    <property type="entry name" value="RB1-INDUCIBLE COILED-COIL"/>
    <property type="match status" value="1"/>
</dbReference>
<dbReference type="PANTHER" id="PTHR13222:SF1">
    <property type="entry name" value="RB1-INDUCIBLE COILED-COIL PROTEIN 1"/>
    <property type="match status" value="1"/>
</dbReference>
<dbReference type="Pfam" id="PF10377">
    <property type="entry name" value="ATG11"/>
    <property type="match status" value="1"/>
</dbReference>
<dbReference type="Pfam" id="PF04108">
    <property type="entry name" value="ATG17_like"/>
    <property type="match status" value="1"/>
</dbReference>
<proteinExistence type="inferred from homology"/>
<evidence type="ECO:0000250" key="1">
    <source>
        <dbReference type="UniProtKB" id="Q12527"/>
    </source>
</evidence>
<evidence type="ECO:0000255" key="2"/>
<evidence type="ECO:0000256" key="3">
    <source>
        <dbReference type="SAM" id="MobiDB-lite"/>
    </source>
</evidence>
<evidence type="ECO:0000269" key="4">
    <source>
    </source>
</evidence>
<evidence type="ECO:0000303" key="5">
    <source>
    </source>
</evidence>
<evidence type="ECO:0000305" key="6"/>